<comment type="function">
    <text evidence="1">May function as sodium-coupled metabolite transporter across the chloroplast envelope.</text>
</comment>
<comment type="subcellular location">
    <subcellularLocation>
        <location evidence="3">Membrane</location>
        <topology evidence="3">Multi-pass membrane protein</topology>
    </subcellularLocation>
    <subcellularLocation>
        <location evidence="3">Plastid</location>
        <location evidence="3">Chloroplast envelope</location>
    </subcellularLocation>
</comment>
<comment type="similarity">
    <text evidence="3">Belongs to the bile acid:sodium symporter (BASS) (TC 2.A.28) family.</text>
</comment>
<gene>
    <name type="primary">BASS3</name>
    <name type="ordered locus">Os02g0475400</name>
    <name type="ordered locus">LOC_Os02g27490</name>
    <name type="ORF">P0419C03.11</name>
</gene>
<accession>Q6K739</accession>
<accession>A0A0P0VIY3</accession>
<feature type="transit peptide" description="Chloroplast" evidence="2">
    <location>
        <begin position="1"/>
        <end position="45"/>
    </location>
</feature>
<feature type="chain" id="PRO_0000418610" description="Probable sodium/metabolite cotransporter BASS3, chloroplastic">
    <location>
        <begin position="46"/>
        <end position="423"/>
    </location>
</feature>
<feature type="transmembrane region" description="Helical" evidence="2">
    <location>
        <begin position="106"/>
        <end position="126"/>
    </location>
</feature>
<feature type="transmembrane region" description="Helical" evidence="2">
    <location>
        <begin position="138"/>
        <end position="158"/>
    </location>
</feature>
<feature type="transmembrane region" description="Helical" evidence="2">
    <location>
        <begin position="165"/>
        <end position="187"/>
    </location>
</feature>
<feature type="transmembrane region" description="Helical" evidence="2">
    <location>
        <begin position="192"/>
        <end position="214"/>
    </location>
</feature>
<feature type="transmembrane region" description="Helical" evidence="2">
    <location>
        <begin position="231"/>
        <end position="251"/>
    </location>
</feature>
<feature type="transmembrane region" description="Helical" evidence="2">
    <location>
        <begin position="254"/>
        <end position="274"/>
    </location>
</feature>
<feature type="transmembrane region" description="Helical" evidence="2">
    <location>
        <begin position="287"/>
        <end position="307"/>
    </location>
</feature>
<feature type="transmembrane region" description="Helical" evidence="2">
    <location>
        <begin position="318"/>
        <end position="338"/>
    </location>
</feature>
<feature type="transmembrane region" description="Helical" evidence="2">
    <location>
        <begin position="380"/>
        <end position="400"/>
    </location>
</feature>
<dbReference type="EMBL" id="AP004870">
    <property type="protein sequence ID" value="BAD21908.1"/>
    <property type="molecule type" value="Genomic_DNA"/>
</dbReference>
<dbReference type="EMBL" id="AP008208">
    <property type="protein sequence ID" value="BAF08757.1"/>
    <property type="molecule type" value="Genomic_DNA"/>
</dbReference>
<dbReference type="EMBL" id="AP014958">
    <property type="protein sequence ID" value="BAS78651.1"/>
    <property type="molecule type" value="Genomic_DNA"/>
</dbReference>
<dbReference type="EMBL" id="AK121008">
    <property type="protein sequence ID" value="BAH00271.1"/>
    <property type="molecule type" value="mRNA"/>
</dbReference>
<dbReference type="RefSeq" id="XP_015623178.1">
    <property type="nucleotide sequence ID" value="XM_015767692.1"/>
</dbReference>
<dbReference type="SMR" id="Q6K739"/>
<dbReference type="FunCoup" id="Q6K739">
    <property type="interactions" value="455"/>
</dbReference>
<dbReference type="STRING" id="39947.Q6K739"/>
<dbReference type="PaxDb" id="39947-Q6K739"/>
<dbReference type="EnsemblPlants" id="Os02t0475400-01">
    <property type="protein sequence ID" value="Os02t0475400-01"/>
    <property type="gene ID" value="Os02g0475400"/>
</dbReference>
<dbReference type="Gramene" id="Os02t0475400-01">
    <property type="protein sequence ID" value="Os02t0475400-01"/>
    <property type="gene ID" value="Os02g0475400"/>
</dbReference>
<dbReference type="KEGG" id="dosa:Os02g0475400"/>
<dbReference type="eggNOG" id="KOG2718">
    <property type="taxonomic scope" value="Eukaryota"/>
</dbReference>
<dbReference type="HOGENOM" id="CLU_034788_3_0_1"/>
<dbReference type="InParanoid" id="Q6K739"/>
<dbReference type="OMA" id="NIMMETT"/>
<dbReference type="OrthoDB" id="203097at2759"/>
<dbReference type="Proteomes" id="UP000000763">
    <property type="component" value="Chromosome 2"/>
</dbReference>
<dbReference type="Proteomes" id="UP000059680">
    <property type="component" value="Chromosome 2"/>
</dbReference>
<dbReference type="GO" id="GO:0009941">
    <property type="term" value="C:chloroplast envelope"/>
    <property type="evidence" value="ECO:0007669"/>
    <property type="project" value="UniProtKB-SubCell"/>
</dbReference>
<dbReference type="GO" id="GO:0016020">
    <property type="term" value="C:membrane"/>
    <property type="evidence" value="ECO:0007669"/>
    <property type="project" value="UniProtKB-SubCell"/>
</dbReference>
<dbReference type="Gene3D" id="1.20.1530.20">
    <property type="match status" value="1"/>
</dbReference>
<dbReference type="InterPro" id="IPR002657">
    <property type="entry name" value="BilAc:Na_symport/Acr3"/>
</dbReference>
<dbReference type="InterPro" id="IPR004710">
    <property type="entry name" value="Bilac:Na_transpt"/>
</dbReference>
<dbReference type="InterPro" id="IPR038770">
    <property type="entry name" value="Na+/solute_symporter_sf"/>
</dbReference>
<dbReference type="PANTHER" id="PTHR10361">
    <property type="entry name" value="SODIUM-BILE ACID COTRANSPORTER"/>
    <property type="match status" value="1"/>
</dbReference>
<dbReference type="PANTHER" id="PTHR10361:SF33">
    <property type="entry name" value="SODIUM_METABOLITE COTRANSPORTER BASS3, CHLOROPLASTIC-RELATED"/>
    <property type="match status" value="1"/>
</dbReference>
<dbReference type="Pfam" id="PF01758">
    <property type="entry name" value="SBF"/>
    <property type="match status" value="1"/>
</dbReference>
<keyword id="KW-0150">Chloroplast</keyword>
<keyword id="KW-0472">Membrane</keyword>
<keyword id="KW-0934">Plastid</keyword>
<keyword id="KW-1185">Reference proteome</keyword>
<keyword id="KW-0809">Transit peptide</keyword>
<keyword id="KW-0812">Transmembrane</keyword>
<keyword id="KW-1133">Transmembrane helix</keyword>
<keyword id="KW-0813">Transport</keyword>
<evidence type="ECO:0000250" key="1"/>
<evidence type="ECO:0000255" key="2"/>
<evidence type="ECO:0000305" key="3"/>
<sequence length="423" mass="43787">MAAAVAASSSSSSSSCAAVGVATASHPHRHRQARFVVSPPAPASPAALLWRRPRRVAPTTFCSAPSLGRVGWPRREGAAWLLSFRAGPVSSPSSAAAGDPSQALSALLPLVVAATAVAALGNPATFSWVSKEYYAPALGGIMLSIGIKLSIDDFALAFKRPVPLTIGYMAQYIVKPLMGVLIARAFGMPSAFFAGFVLTCCVSGAQLSSYASFLSKGDVALSILLTSCSTISSVVVTPVLTGLLIGSVVPVDGIAMAKSILQVVLVPVTLGLLLNTYAKAVVNVIQPVMPFVAMLCTSLCIGSPLAINRSKILSSEGFLLLLPIVTFHIAAFIVGYWISKLPMLRQEEPVCRTISVCTGMQSSTLAGLLATQFLGSSQAVPAACSVVIMAIFGLTLASYWGNGLRIRDIGSRFVPQASAGVSS</sequence>
<protein>
    <recommendedName>
        <fullName>Probable sodium/metabolite cotransporter BASS3, chloroplastic</fullName>
    </recommendedName>
    <alternativeName>
        <fullName>Bile acid-sodium symporter family protein 3</fullName>
    </alternativeName>
</protein>
<proteinExistence type="evidence at transcript level"/>
<name>BASS3_ORYSJ</name>
<organism>
    <name type="scientific">Oryza sativa subsp. japonica</name>
    <name type="common">Rice</name>
    <dbReference type="NCBI Taxonomy" id="39947"/>
    <lineage>
        <taxon>Eukaryota</taxon>
        <taxon>Viridiplantae</taxon>
        <taxon>Streptophyta</taxon>
        <taxon>Embryophyta</taxon>
        <taxon>Tracheophyta</taxon>
        <taxon>Spermatophyta</taxon>
        <taxon>Magnoliopsida</taxon>
        <taxon>Liliopsida</taxon>
        <taxon>Poales</taxon>
        <taxon>Poaceae</taxon>
        <taxon>BOP clade</taxon>
        <taxon>Oryzoideae</taxon>
        <taxon>Oryzeae</taxon>
        <taxon>Oryzinae</taxon>
        <taxon>Oryza</taxon>
        <taxon>Oryza sativa</taxon>
    </lineage>
</organism>
<reference key="1">
    <citation type="journal article" date="2005" name="Nature">
        <title>The map-based sequence of the rice genome.</title>
        <authorList>
            <consortium name="International rice genome sequencing project (IRGSP)"/>
        </authorList>
    </citation>
    <scope>NUCLEOTIDE SEQUENCE [LARGE SCALE GENOMIC DNA]</scope>
    <source>
        <strain>cv. Nipponbare</strain>
    </source>
</reference>
<reference key="2">
    <citation type="journal article" date="2008" name="Nucleic Acids Res.">
        <title>The rice annotation project database (RAP-DB): 2008 update.</title>
        <authorList>
            <consortium name="The rice annotation project (RAP)"/>
        </authorList>
    </citation>
    <scope>GENOME REANNOTATION</scope>
    <source>
        <strain>cv. Nipponbare</strain>
    </source>
</reference>
<reference key="3">
    <citation type="journal article" date="2013" name="Rice">
        <title>Improvement of the Oryza sativa Nipponbare reference genome using next generation sequence and optical map data.</title>
        <authorList>
            <person name="Kawahara Y."/>
            <person name="de la Bastide M."/>
            <person name="Hamilton J.P."/>
            <person name="Kanamori H."/>
            <person name="McCombie W.R."/>
            <person name="Ouyang S."/>
            <person name="Schwartz D.C."/>
            <person name="Tanaka T."/>
            <person name="Wu J."/>
            <person name="Zhou S."/>
            <person name="Childs K.L."/>
            <person name="Davidson R.M."/>
            <person name="Lin H."/>
            <person name="Quesada-Ocampo L."/>
            <person name="Vaillancourt B."/>
            <person name="Sakai H."/>
            <person name="Lee S.S."/>
            <person name="Kim J."/>
            <person name="Numa H."/>
            <person name="Itoh T."/>
            <person name="Buell C.R."/>
            <person name="Matsumoto T."/>
        </authorList>
    </citation>
    <scope>GENOME REANNOTATION</scope>
    <source>
        <strain>cv. Nipponbare</strain>
    </source>
</reference>
<reference key="4">
    <citation type="journal article" date="2003" name="Science">
        <title>Collection, mapping, and annotation of over 28,000 cDNA clones from japonica rice.</title>
        <authorList>
            <consortium name="The rice full-length cDNA consortium"/>
        </authorList>
    </citation>
    <scope>NUCLEOTIDE SEQUENCE [LARGE SCALE MRNA]</scope>
    <source>
        <strain>cv. Nipponbare</strain>
    </source>
</reference>